<reference key="1">
    <citation type="journal article" date="1993" name="Biochim. Biophys. Acta">
        <title>Nucleotide sequences of the Macaca fascicularis apolipoprotein C-III and A-IV genes.</title>
        <authorList>
            <person name="Osada J."/>
            <person name="Pocovi M."/>
            <person name="Nicolosi R.J."/>
            <person name="Schaefer E.J."/>
            <person name="Ordovas J.M."/>
        </authorList>
    </citation>
    <scope>NUCLEOTIDE SEQUENCE [GENOMIC DNA]</scope>
    <source>
        <tissue>Leukocyte</tissue>
    </source>
</reference>
<reference key="2">
    <citation type="journal article" date="1987" name="Biochemistry">
        <title>Homologues of the human C and A apolipoproteins in the Macaca fascicularis (cynomolgus) monkey.</title>
        <authorList>
            <person name="Herbert P.N."/>
            <person name="Bausserman L.L."/>
            <person name="Lynch K.M."/>
            <person name="Saritelli A.L."/>
            <person name="Kantor M.A."/>
            <person name="Nicolosi R.J."/>
            <person name="Shulman R.S."/>
        </authorList>
    </citation>
    <scope>PROTEIN SEQUENCE OF 21-36</scope>
</reference>
<keyword id="KW-0162">Chylomicron</keyword>
<keyword id="KW-0903">Direct protein sequencing</keyword>
<keyword id="KW-0325">Glycoprotein</keyword>
<keyword id="KW-0442">Lipid degradation</keyword>
<keyword id="KW-0443">Lipid metabolism</keyword>
<keyword id="KW-0445">Lipid transport</keyword>
<keyword id="KW-1185">Reference proteome</keyword>
<keyword id="KW-0964">Secreted</keyword>
<keyword id="KW-0730">Sialic acid</keyword>
<keyword id="KW-0732">Signal</keyword>
<keyword id="KW-0813">Transport</keyword>
<keyword id="KW-0850">VLDL</keyword>
<name>APOC3_MACFA</name>
<gene>
    <name type="primary">APOC3</name>
</gene>
<evidence type="ECO:0000250" key="1"/>
<evidence type="ECO:0000250" key="2">
    <source>
        <dbReference type="UniProtKB" id="P02656"/>
    </source>
</evidence>
<evidence type="ECO:0000269" key="3">
    <source>
    </source>
</evidence>
<evidence type="ECO:0000305" key="4"/>
<dbReference type="EMBL" id="X68359">
    <property type="protein sequence ID" value="CAA48419.1"/>
    <property type="molecule type" value="Genomic_DNA"/>
</dbReference>
<dbReference type="PIR" id="S30196">
    <property type="entry name" value="S29566"/>
</dbReference>
<dbReference type="RefSeq" id="XP_005579787.1">
    <property type="nucleotide sequence ID" value="XM_005579730.3"/>
</dbReference>
<dbReference type="SMR" id="P18659"/>
<dbReference type="STRING" id="9541.ENSMFAP00000004270"/>
<dbReference type="GlyCosmos" id="P18659">
    <property type="glycosylation" value="1 site, No reported glycans"/>
</dbReference>
<dbReference type="GeneID" id="102144085"/>
<dbReference type="KEGG" id="mcf:102144085"/>
<dbReference type="CTD" id="345"/>
<dbReference type="VEuPathDB" id="HostDB:ENSMFAG00000001837"/>
<dbReference type="eggNOG" id="ENOG502SZ00">
    <property type="taxonomic scope" value="Eukaryota"/>
</dbReference>
<dbReference type="OMA" id="YWSTFKG"/>
<dbReference type="Proteomes" id="UP000233100">
    <property type="component" value="Chromosome 14"/>
</dbReference>
<dbReference type="GO" id="GO:0042627">
    <property type="term" value="C:chylomicron"/>
    <property type="evidence" value="ECO:0007669"/>
    <property type="project" value="UniProtKB-KW"/>
</dbReference>
<dbReference type="GO" id="GO:0034363">
    <property type="term" value="C:intermediate-density lipoprotein particle"/>
    <property type="evidence" value="ECO:0007669"/>
    <property type="project" value="TreeGrafter"/>
</dbReference>
<dbReference type="GO" id="GO:0034366">
    <property type="term" value="C:spherical high-density lipoprotein particle"/>
    <property type="evidence" value="ECO:0007669"/>
    <property type="project" value="TreeGrafter"/>
</dbReference>
<dbReference type="GO" id="GO:0034361">
    <property type="term" value="C:very-low-density lipoprotein particle"/>
    <property type="evidence" value="ECO:0007669"/>
    <property type="project" value="UniProtKB-KW"/>
</dbReference>
<dbReference type="GO" id="GO:0070653">
    <property type="term" value="F:high-density lipoprotein particle receptor binding"/>
    <property type="evidence" value="ECO:0007669"/>
    <property type="project" value="TreeGrafter"/>
</dbReference>
<dbReference type="GO" id="GO:0055102">
    <property type="term" value="F:lipase inhibitor activity"/>
    <property type="evidence" value="ECO:0007669"/>
    <property type="project" value="TreeGrafter"/>
</dbReference>
<dbReference type="GO" id="GO:0005543">
    <property type="term" value="F:phospholipid binding"/>
    <property type="evidence" value="ECO:0007669"/>
    <property type="project" value="TreeGrafter"/>
</dbReference>
<dbReference type="GO" id="GO:0042632">
    <property type="term" value="P:cholesterol homeostasis"/>
    <property type="evidence" value="ECO:0007669"/>
    <property type="project" value="TreeGrafter"/>
</dbReference>
<dbReference type="GO" id="GO:0016042">
    <property type="term" value="P:lipid catabolic process"/>
    <property type="evidence" value="ECO:0007669"/>
    <property type="project" value="UniProtKB-KW"/>
</dbReference>
<dbReference type="GO" id="GO:0006869">
    <property type="term" value="P:lipid transport"/>
    <property type="evidence" value="ECO:0007669"/>
    <property type="project" value="UniProtKB-KW"/>
</dbReference>
<dbReference type="GO" id="GO:0042157">
    <property type="term" value="P:lipoprotein metabolic process"/>
    <property type="evidence" value="ECO:0007669"/>
    <property type="project" value="InterPro"/>
</dbReference>
<dbReference type="GO" id="GO:0010987">
    <property type="term" value="P:negative regulation of high-density lipoprotein particle clearance"/>
    <property type="evidence" value="ECO:0007669"/>
    <property type="project" value="TreeGrafter"/>
</dbReference>
<dbReference type="GO" id="GO:0010989">
    <property type="term" value="P:negative regulation of low-density lipoprotein particle clearance"/>
    <property type="evidence" value="ECO:0007669"/>
    <property type="project" value="TreeGrafter"/>
</dbReference>
<dbReference type="GO" id="GO:0010897">
    <property type="term" value="P:negative regulation of triglyceride catabolic process"/>
    <property type="evidence" value="ECO:0007669"/>
    <property type="project" value="TreeGrafter"/>
</dbReference>
<dbReference type="GO" id="GO:0010916">
    <property type="term" value="P:negative regulation of very-low-density lipoprotein particle clearance"/>
    <property type="evidence" value="ECO:0007669"/>
    <property type="project" value="TreeGrafter"/>
</dbReference>
<dbReference type="GO" id="GO:0070328">
    <property type="term" value="P:triglyceride homeostasis"/>
    <property type="evidence" value="ECO:0007669"/>
    <property type="project" value="TreeGrafter"/>
</dbReference>
<dbReference type="Gene3D" id="6.10.90.10">
    <property type="entry name" value="Apolipoprotein CIII"/>
    <property type="match status" value="1"/>
</dbReference>
<dbReference type="InterPro" id="IPR008403">
    <property type="entry name" value="Apo-CIII"/>
</dbReference>
<dbReference type="InterPro" id="IPR038195">
    <property type="entry name" value="Apo_CIII_sf"/>
</dbReference>
<dbReference type="PANTHER" id="PTHR14225">
    <property type="entry name" value="APOLIPOPROTEIN C-III"/>
    <property type="match status" value="1"/>
</dbReference>
<dbReference type="PANTHER" id="PTHR14225:SF0">
    <property type="entry name" value="APOLIPOPROTEIN C-III"/>
    <property type="match status" value="1"/>
</dbReference>
<dbReference type="Pfam" id="PF05778">
    <property type="entry name" value="Apo-CIII"/>
    <property type="match status" value="1"/>
</dbReference>
<accession>P18659</accession>
<comment type="function">
    <text evidence="2">Component of triglyceride-rich very low density lipoproteins (VLDL) and high density lipoproteins (HDL) in plasma. Plays a multifaceted role in triglyceride homeostasis. Intracellularly, promotes hepatic very low density lipoprotein 1 (VLDL1) assembly and secretion; extracellularly, attenuates hydrolysis and clearance of triglyceride-rich lipoproteins (TRLs). Impairs the lipolysis of TRLs by inhibiting lipoprotein lipase and the hepatic uptake of TRLs by remnant receptors. Formed of several curved helices connected via semiflexible hinges, so that it can wrap tightly around the curved micelle surface and easily adapt to the different diameters of its natural binding partners.</text>
</comment>
<comment type="subcellular location">
    <subcellularLocation>
        <location evidence="2">Secreted</location>
    </subcellularLocation>
</comment>
<comment type="PTM">
    <text evidence="2">The most abundant glycoforms are characterized by an O-linked disaccharide galactose linked to N-acetylgalactosamine (Gal-GalNAc), further modified with up to 3 sialic acid residues. Less abundant glycoforms are characterized by more complex and fucosylated glycan moieties. O-glycosylated on Thr-94 with a core 1 or possibly core 8 glycan.</text>
</comment>
<comment type="similarity">
    <text evidence="4">Belongs to the apolipoprotein C3 family.</text>
</comment>
<sequence>MQPRVLLVAALLSLLASARASEAEDTSLLGFMQGYMQHATKTAKDALTSVQESQVAQQARGWVTDGFSSLKDYWSTVKDKLSGFWDLNPEAKPTLAEAA</sequence>
<feature type="signal peptide" evidence="3">
    <location>
        <begin position="1"/>
        <end position="20"/>
    </location>
</feature>
<feature type="chain" id="PRO_0000002032" description="Apolipoprotein C-III">
    <location>
        <begin position="21"/>
        <end position="99"/>
    </location>
</feature>
<feature type="region of interest" description="Lipid-binding" evidence="1">
    <location>
        <begin position="68"/>
        <end position="99"/>
    </location>
</feature>
<feature type="site" description="May interact with the LDL receptor" evidence="2">
    <location>
        <position position="41"/>
    </location>
</feature>
<feature type="glycosylation site" description="O-linked (GalNAc...) threonine" evidence="2">
    <location>
        <position position="94"/>
    </location>
</feature>
<proteinExistence type="evidence at protein level"/>
<organism>
    <name type="scientific">Macaca fascicularis</name>
    <name type="common">Crab-eating macaque</name>
    <name type="synonym">Cynomolgus monkey</name>
    <dbReference type="NCBI Taxonomy" id="9541"/>
    <lineage>
        <taxon>Eukaryota</taxon>
        <taxon>Metazoa</taxon>
        <taxon>Chordata</taxon>
        <taxon>Craniata</taxon>
        <taxon>Vertebrata</taxon>
        <taxon>Euteleostomi</taxon>
        <taxon>Mammalia</taxon>
        <taxon>Eutheria</taxon>
        <taxon>Euarchontoglires</taxon>
        <taxon>Primates</taxon>
        <taxon>Haplorrhini</taxon>
        <taxon>Catarrhini</taxon>
        <taxon>Cercopithecidae</taxon>
        <taxon>Cercopithecinae</taxon>
        <taxon>Macaca</taxon>
    </lineage>
</organism>
<protein>
    <recommendedName>
        <fullName>Apolipoprotein C-III</fullName>
        <shortName>Apo-CIII</shortName>
        <shortName>ApoC-III</shortName>
    </recommendedName>
    <alternativeName>
        <fullName>Apolipoprotein C3</fullName>
    </alternativeName>
</protein>